<gene>
    <name type="primary">mrh4</name>
    <name type="ORF">An12g03850</name>
</gene>
<sequence length="633" mass="70797">MNRLGRLSLPLRPQVCLLCQTQATMSSPLAGWQAVRSMATVRQRRQAARMVLSSNVDKSSLKQGRSKRDRAGPWSGMNQTEARLRDAPRSRSRAALKRSGDSEDDKQKPDSPLYKALKMQTALAPIPYGRRTAIKNKIAEVSSFDQFPLLPVVRHSISSQALSRTGDIVPTPIQRLAIPQLLKDPIPKRTSKDVSDHEPNFEQYLLAAETGSGKTLAYLIPLIDSLKRMEVEDKEFEKWEAEQKAKEREEKLKNRAFDIEPEEAPLSDAGRPRVIILVPTSELVAQVGAKVKALSHTVKYRSGMISSNLTPRRIKSILFNPSGIDILVATPHLLASIAKTDPYVLSRVSHLVLDEADSLMDRSFLPTTTEIIEKSASSLHKLILCSATIPRSLDNLLRKRYPDIRRLTTPNLHAIPRRVQLGVVDIQRDPYRGNRSLACADVIWSIGKAGDTEPTHPFLAQAGPKVKKILVFVNEREEADEVAQFLRSKGIDAQSFSRDSSSRKQEELLEEFTESPIPPTAEEIMLAKNKRRQDNSIPFVFPEQQNKPGAERGLPNTKVLVTTDIASRGIDTIAVKTVILYHVPHNTIDFIHRLGRLGRMGKRGRAVVLVGKKDRKDVVKEVREGMFRGQALI</sequence>
<proteinExistence type="inferred from homology"/>
<reference key="1">
    <citation type="journal article" date="2007" name="Nat. Biotechnol.">
        <title>Genome sequencing and analysis of the versatile cell factory Aspergillus niger CBS 513.88.</title>
        <authorList>
            <person name="Pel H.J."/>
            <person name="de Winde J.H."/>
            <person name="Archer D.B."/>
            <person name="Dyer P.S."/>
            <person name="Hofmann G."/>
            <person name="Schaap P.J."/>
            <person name="Turner G."/>
            <person name="de Vries R.P."/>
            <person name="Albang R."/>
            <person name="Albermann K."/>
            <person name="Andersen M.R."/>
            <person name="Bendtsen J.D."/>
            <person name="Benen J.A.E."/>
            <person name="van den Berg M."/>
            <person name="Breestraat S."/>
            <person name="Caddick M.X."/>
            <person name="Contreras R."/>
            <person name="Cornell M."/>
            <person name="Coutinho P.M."/>
            <person name="Danchin E.G.J."/>
            <person name="Debets A.J.M."/>
            <person name="Dekker P."/>
            <person name="van Dijck P.W.M."/>
            <person name="van Dijk A."/>
            <person name="Dijkhuizen L."/>
            <person name="Driessen A.J.M."/>
            <person name="d'Enfert C."/>
            <person name="Geysens S."/>
            <person name="Goosen C."/>
            <person name="Groot G.S.P."/>
            <person name="de Groot P.W.J."/>
            <person name="Guillemette T."/>
            <person name="Henrissat B."/>
            <person name="Herweijer M."/>
            <person name="van den Hombergh J.P.T.W."/>
            <person name="van den Hondel C.A.M.J.J."/>
            <person name="van der Heijden R.T.J.M."/>
            <person name="van der Kaaij R.M."/>
            <person name="Klis F.M."/>
            <person name="Kools H.J."/>
            <person name="Kubicek C.P."/>
            <person name="van Kuyk P.A."/>
            <person name="Lauber J."/>
            <person name="Lu X."/>
            <person name="van der Maarel M.J.E.C."/>
            <person name="Meulenberg R."/>
            <person name="Menke H."/>
            <person name="Mortimer M.A."/>
            <person name="Nielsen J."/>
            <person name="Oliver S.G."/>
            <person name="Olsthoorn M."/>
            <person name="Pal K."/>
            <person name="van Peij N.N.M.E."/>
            <person name="Ram A.F.J."/>
            <person name="Rinas U."/>
            <person name="Roubos J.A."/>
            <person name="Sagt C.M.J."/>
            <person name="Schmoll M."/>
            <person name="Sun J."/>
            <person name="Ussery D."/>
            <person name="Varga J."/>
            <person name="Vervecken W."/>
            <person name="van de Vondervoort P.J.J."/>
            <person name="Wedler H."/>
            <person name="Woesten H.A.B."/>
            <person name="Zeng A.-P."/>
            <person name="van Ooyen A.J.J."/>
            <person name="Visser J."/>
            <person name="Stam H."/>
        </authorList>
    </citation>
    <scope>NUCLEOTIDE SEQUENCE [LARGE SCALE GENOMIC DNA]</scope>
    <source>
        <strain>ATCC MYA-4892 / CBS 513.88 / FGSC A1513</strain>
    </source>
</reference>
<protein>
    <recommendedName>
        <fullName>ATP-dependent RNA helicase mrh4, mitochondrial</fullName>
        <ecNumber>3.6.4.13</ecNumber>
    </recommendedName>
</protein>
<keyword id="KW-0067">ATP-binding</keyword>
<keyword id="KW-0347">Helicase</keyword>
<keyword id="KW-0378">Hydrolase</keyword>
<keyword id="KW-0496">Mitochondrion</keyword>
<keyword id="KW-0547">Nucleotide-binding</keyword>
<keyword id="KW-1185">Reference proteome</keyword>
<keyword id="KW-0694">RNA-binding</keyword>
<keyword id="KW-0809">Transit peptide</keyword>
<evidence type="ECO:0000250" key="1"/>
<evidence type="ECO:0000255" key="2"/>
<evidence type="ECO:0000255" key="3">
    <source>
        <dbReference type="PROSITE-ProRule" id="PRU00541"/>
    </source>
</evidence>
<evidence type="ECO:0000255" key="4">
    <source>
        <dbReference type="PROSITE-ProRule" id="PRU00542"/>
    </source>
</evidence>
<evidence type="ECO:0000256" key="5">
    <source>
        <dbReference type="SAM" id="MobiDB-lite"/>
    </source>
</evidence>
<evidence type="ECO:0000305" key="6"/>
<name>MRH4_ASPNC</name>
<feature type="transit peptide" description="Mitochondrion" evidence="2">
    <location>
        <begin position="1"/>
        <end position="38"/>
    </location>
</feature>
<feature type="chain" id="PRO_0000282709" description="ATP-dependent RNA helicase mrh4, mitochondrial">
    <location>
        <begin position="39"/>
        <end position="633"/>
    </location>
</feature>
<feature type="domain" description="Helicase ATP-binding" evidence="3">
    <location>
        <begin position="195"/>
        <end position="407"/>
    </location>
</feature>
<feature type="domain" description="Helicase C-terminal" evidence="4">
    <location>
        <begin position="458"/>
        <end position="633"/>
    </location>
</feature>
<feature type="region of interest" description="Disordered" evidence="5">
    <location>
        <begin position="50"/>
        <end position="115"/>
    </location>
</feature>
<feature type="short sequence motif" description="Q motif">
    <location>
        <begin position="142"/>
        <end position="175"/>
    </location>
</feature>
<feature type="short sequence motif" description="DEAD box">
    <location>
        <begin position="354"/>
        <end position="357"/>
    </location>
</feature>
<feature type="compositionally biased region" description="Polar residues" evidence="5">
    <location>
        <begin position="52"/>
        <end position="63"/>
    </location>
</feature>
<feature type="compositionally biased region" description="Basic and acidic residues" evidence="5">
    <location>
        <begin position="98"/>
        <end position="109"/>
    </location>
</feature>
<feature type="binding site" evidence="3">
    <location>
        <begin position="208"/>
        <end position="215"/>
    </location>
    <ligand>
        <name>ATP</name>
        <dbReference type="ChEBI" id="CHEBI:30616"/>
    </ligand>
</feature>
<accession>A2QZ71</accession>
<dbReference type="EC" id="3.6.4.13"/>
<dbReference type="EMBL" id="AM270267">
    <property type="protein sequence ID" value="CAK46156.1"/>
    <property type="status" value="ALT_SEQ"/>
    <property type="molecule type" value="Genomic_DNA"/>
</dbReference>
<dbReference type="SMR" id="A2QZ71"/>
<dbReference type="HOGENOM" id="CLU_003041_18_0_1"/>
<dbReference type="Proteomes" id="UP000006706">
    <property type="component" value="Chromosome 3L"/>
</dbReference>
<dbReference type="GO" id="GO:0005739">
    <property type="term" value="C:mitochondrion"/>
    <property type="evidence" value="ECO:0007669"/>
    <property type="project" value="UniProtKB-SubCell"/>
</dbReference>
<dbReference type="GO" id="GO:0005524">
    <property type="term" value="F:ATP binding"/>
    <property type="evidence" value="ECO:0007669"/>
    <property type="project" value="UniProtKB-KW"/>
</dbReference>
<dbReference type="GO" id="GO:0016887">
    <property type="term" value="F:ATP hydrolysis activity"/>
    <property type="evidence" value="ECO:0007669"/>
    <property type="project" value="RHEA"/>
</dbReference>
<dbReference type="GO" id="GO:0003723">
    <property type="term" value="F:RNA binding"/>
    <property type="evidence" value="ECO:0007669"/>
    <property type="project" value="UniProtKB-KW"/>
</dbReference>
<dbReference type="GO" id="GO:0003724">
    <property type="term" value="F:RNA helicase activity"/>
    <property type="evidence" value="ECO:0007669"/>
    <property type="project" value="UniProtKB-EC"/>
</dbReference>
<dbReference type="CDD" id="cd17965">
    <property type="entry name" value="DEADc_MRH4"/>
    <property type="match status" value="1"/>
</dbReference>
<dbReference type="CDD" id="cd18787">
    <property type="entry name" value="SF2_C_DEAD"/>
    <property type="match status" value="1"/>
</dbReference>
<dbReference type="Gene3D" id="3.40.50.300">
    <property type="entry name" value="P-loop containing nucleotide triphosphate hydrolases"/>
    <property type="match status" value="2"/>
</dbReference>
<dbReference type="InterPro" id="IPR011545">
    <property type="entry name" value="DEAD/DEAH_box_helicase_dom"/>
</dbReference>
<dbReference type="InterPro" id="IPR014001">
    <property type="entry name" value="Helicase_ATP-bd"/>
</dbReference>
<dbReference type="InterPro" id="IPR001650">
    <property type="entry name" value="Helicase_C-like"/>
</dbReference>
<dbReference type="InterPro" id="IPR027417">
    <property type="entry name" value="P-loop_NTPase"/>
</dbReference>
<dbReference type="PANTHER" id="PTHR47960">
    <property type="entry name" value="DEAD-BOX ATP-DEPENDENT RNA HELICASE 50"/>
    <property type="match status" value="1"/>
</dbReference>
<dbReference type="Pfam" id="PF00270">
    <property type="entry name" value="DEAD"/>
    <property type="match status" value="1"/>
</dbReference>
<dbReference type="Pfam" id="PF00271">
    <property type="entry name" value="Helicase_C"/>
    <property type="match status" value="1"/>
</dbReference>
<dbReference type="SMART" id="SM00487">
    <property type="entry name" value="DEXDc"/>
    <property type="match status" value="1"/>
</dbReference>
<dbReference type="SMART" id="SM00490">
    <property type="entry name" value="HELICc"/>
    <property type="match status" value="1"/>
</dbReference>
<dbReference type="SUPFAM" id="SSF52540">
    <property type="entry name" value="P-loop containing nucleoside triphosphate hydrolases"/>
    <property type="match status" value="1"/>
</dbReference>
<dbReference type="PROSITE" id="PS51192">
    <property type="entry name" value="HELICASE_ATP_BIND_1"/>
    <property type="match status" value="1"/>
</dbReference>
<dbReference type="PROSITE" id="PS51194">
    <property type="entry name" value="HELICASE_CTER"/>
    <property type="match status" value="1"/>
</dbReference>
<dbReference type="PROSITE" id="PS51195">
    <property type="entry name" value="Q_MOTIF"/>
    <property type="match status" value="1"/>
</dbReference>
<organism>
    <name type="scientific">Aspergillus niger (strain ATCC MYA-4892 / CBS 513.88 / FGSC A1513)</name>
    <dbReference type="NCBI Taxonomy" id="425011"/>
    <lineage>
        <taxon>Eukaryota</taxon>
        <taxon>Fungi</taxon>
        <taxon>Dikarya</taxon>
        <taxon>Ascomycota</taxon>
        <taxon>Pezizomycotina</taxon>
        <taxon>Eurotiomycetes</taxon>
        <taxon>Eurotiomycetidae</taxon>
        <taxon>Eurotiales</taxon>
        <taxon>Aspergillaceae</taxon>
        <taxon>Aspergillus</taxon>
        <taxon>Aspergillus subgen. Circumdati</taxon>
    </lineage>
</organism>
<comment type="function">
    <text evidence="1">ATP-binding RNA helicase involved in mitochondrial RNA metabolism. Required for maintenance of mitochondrial DNA (By similarity).</text>
</comment>
<comment type="catalytic activity">
    <reaction>
        <text>ATP + H2O = ADP + phosphate + H(+)</text>
        <dbReference type="Rhea" id="RHEA:13065"/>
        <dbReference type="ChEBI" id="CHEBI:15377"/>
        <dbReference type="ChEBI" id="CHEBI:15378"/>
        <dbReference type="ChEBI" id="CHEBI:30616"/>
        <dbReference type="ChEBI" id="CHEBI:43474"/>
        <dbReference type="ChEBI" id="CHEBI:456216"/>
        <dbReference type="EC" id="3.6.4.13"/>
    </reaction>
</comment>
<comment type="subcellular location">
    <subcellularLocation>
        <location evidence="1">Mitochondrion</location>
    </subcellularLocation>
</comment>
<comment type="domain">
    <text>The Q motif is unique to and characteristic of the DEAD box family of RNA helicases and controls ATP binding and hydrolysis.</text>
</comment>
<comment type="similarity">
    <text evidence="6">Belongs to the DEAD box helicase family. MRH4 subfamily.</text>
</comment>
<comment type="sequence caution" evidence="6">
    <conflict type="erroneous gene model prediction">
        <sequence resource="EMBL-CDS" id="CAK46156"/>
    </conflict>
</comment>